<dbReference type="EC" id="2.4.2.29" evidence="1"/>
<dbReference type="EMBL" id="CP001015">
    <property type="protein sequence ID" value="ACF56571.1"/>
    <property type="molecule type" value="Genomic_DNA"/>
</dbReference>
<dbReference type="SMR" id="B5E2X9"/>
<dbReference type="KEGG" id="spx:SPG_1973"/>
<dbReference type="HOGENOM" id="CLU_022060_0_1_9"/>
<dbReference type="UniPathway" id="UPA00392"/>
<dbReference type="GO" id="GO:0005829">
    <property type="term" value="C:cytosol"/>
    <property type="evidence" value="ECO:0007669"/>
    <property type="project" value="TreeGrafter"/>
</dbReference>
<dbReference type="GO" id="GO:0046872">
    <property type="term" value="F:metal ion binding"/>
    <property type="evidence" value="ECO:0007669"/>
    <property type="project" value="UniProtKB-KW"/>
</dbReference>
<dbReference type="GO" id="GO:0008479">
    <property type="term" value="F:tRNA-guanosine(34) queuine transglycosylase activity"/>
    <property type="evidence" value="ECO:0007669"/>
    <property type="project" value="UniProtKB-UniRule"/>
</dbReference>
<dbReference type="GO" id="GO:0008616">
    <property type="term" value="P:queuosine biosynthetic process"/>
    <property type="evidence" value="ECO:0007669"/>
    <property type="project" value="UniProtKB-UniRule"/>
</dbReference>
<dbReference type="GO" id="GO:0002099">
    <property type="term" value="P:tRNA wobble guanine modification"/>
    <property type="evidence" value="ECO:0007669"/>
    <property type="project" value="TreeGrafter"/>
</dbReference>
<dbReference type="GO" id="GO:0101030">
    <property type="term" value="P:tRNA-guanine transglycosylation"/>
    <property type="evidence" value="ECO:0007669"/>
    <property type="project" value="InterPro"/>
</dbReference>
<dbReference type="FunFam" id="3.20.20.105:FF:000001">
    <property type="entry name" value="Queuine tRNA-ribosyltransferase"/>
    <property type="match status" value="1"/>
</dbReference>
<dbReference type="Gene3D" id="3.20.20.105">
    <property type="entry name" value="Queuine tRNA-ribosyltransferase-like"/>
    <property type="match status" value="1"/>
</dbReference>
<dbReference type="HAMAP" id="MF_00168">
    <property type="entry name" value="Q_tRNA_Tgt"/>
    <property type="match status" value="1"/>
</dbReference>
<dbReference type="InterPro" id="IPR050076">
    <property type="entry name" value="ArchSynthase1/Queuine_TRR"/>
</dbReference>
<dbReference type="InterPro" id="IPR004803">
    <property type="entry name" value="TGT"/>
</dbReference>
<dbReference type="InterPro" id="IPR036511">
    <property type="entry name" value="TGT-like_sf"/>
</dbReference>
<dbReference type="InterPro" id="IPR002616">
    <property type="entry name" value="tRNA_ribo_trans-like"/>
</dbReference>
<dbReference type="NCBIfam" id="TIGR00430">
    <property type="entry name" value="Q_tRNA_tgt"/>
    <property type="match status" value="1"/>
</dbReference>
<dbReference type="NCBIfam" id="TIGR00449">
    <property type="entry name" value="tgt_general"/>
    <property type="match status" value="1"/>
</dbReference>
<dbReference type="PANTHER" id="PTHR46499">
    <property type="entry name" value="QUEUINE TRNA-RIBOSYLTRANSFERASE"/>
    <property type="match status" value="1"/>
</dbReference>
<dbReference type="PANTHER" id="PTHR46499:SF1">
    <property type="entry name" value="QUEUINE TRNA-RIBOSYLTRANSFERASE"/>
    <property type="match status" value="1"/>
</dbReference>
<dbReference type="Pfam" id="PF01702">
    <property type="entry name" value="TGT"/>
    <property type="match status" value="1"/>
</dbReference>
<dbReference type="SUPFAM" id="SSF51713">
    <property type="entry name" value="tRNA-guanine transglycosylase"/>
    <property type="match status" value="1"/>
</dbReference>
<feature type="chain" id="PRO_1000097568" description="Queuine tRNA-ribosyltransferase">
    <location>
        <begin position="1"/>
        <end position="380"/>
    </location>
</feature>
<feature type="region of interest" description="RNA binding" evidence="1">
    <location>
        <begin position="251"/>
        <end position="257"/>
    </location>
</feature>
<feature type="region of interest" description="RNA binding; important for wobble base 34 recognition" evidence="1">
    <location>
        <begin position="275"/>
        <end position="279"/>
    </location>
</feature>
<feature type="active site" description="Proton acceptor" evidence="1">
    <location>
        <position position="96"/>
    </location>
</feature>
<feature type="active site" description="Nucleophile" evidence="1">
    <location>
        <position position="270"/>
    </location>
</feature>
<feature type="binding site" evidence="1">
    <location>
        <begin position="96"/>
        <end position="100"/>
    </location>
    <ligand>
        <name>substrate</name>
    </ligand>
</feature>
<feature type="binding site" evidence="1">
    <location>
        <position position="150"/>
    </location>
    <ligand>
        <name>substrate</name>
    </ligand>
</feature>
<feature type="binding site" evidence="1">
    <location>
        <position position="193"/>
    </location>
    <ligand>
        <name>substrate</name>
    </ligand>
</feature>
<feature type="binding site" evidence="1">
    <location>
        <position position="220"/>
    </location>
    <ligand>
        <name>substrate</name>
    </ligand>
</feature>
<feature type="binding site" evidence="1">
    <location>
        <position position="308"/>
    </location>
    <ligand>
        <name>Zn(2+)</name>
        <dbReference type="ChEBI" id="CHEBI:29105"/>
    </ligand>
</feature>
<feature type="binding site" evidence="1">
    <location>
        <position position="310"/>
    </location>
    <ligand>
        <name>Zn(2+)</name>
        <dbReference type="ChEBI" id="CHEBI:29105"/>
    </ligand>
</feature>
<feature type="binding site" evidence="1">
    <location>
        <position position="313"/>
    </location>
    <ligand>
        <name>Zn(2+)</name>
        <dbReference type="ChEBI" id="CHEBI:29105"/>
    </ligand>
</feature>
<feature type="binding site" evidence="1">
    <location>
        <position position="339"/>
    </location>
    <ligand>
        <name>Zn(2+)</name>
        <dbReference type="ChEBI" id="CHEBI:29105"/>
    </ligand>
</feature>
<evidence type="ECO:0000255" key="1">
    <source>
        <dbReference type="HAMAP-Rule" id="MF_00168"/>
    </source>
</evidence>
<reference key="1">
    <citation type="journal article" date="2001" name="Microb. Drug Resist.">
        <title>Annotated draft genomic sequence from a Streptococcus pneumoniae type 19F clinical isolate.</title>
        <authorList>
            <person name="Dopazo J."/>
            <person name="Mendoza A."/>
            <person name="Herrero J."/>
            <person name="Caldara F."/>
            <person name="Humbert Y."/>
            <person name="Friedli L."/>
            <person name="Guerrier M."/>
            <person name="Grand-Schenk E."/>
            <person name="Gandin C."/>
            <person name="de Francesco M."/>
            <person name="Polissi A."/>
            <person name="Buell G."/>
            <person name="Feger G."/>
            <person name="Garcia E."/>
            <person name="Peitsch M."/>
            <person name="Garcia-Bustos J.F."/>
        </authorList>
    </citation>
    <scope>NUCLEOTIDE SEQUENCE [LARGE SCALE GENOMIC DNA]</scope>
    <source>
        <strain>G54</strain>
    </source>
</reference>
<reference key="2">
    <citation type="submission" date="2008-03" db="EMBL/GenBank/DDBJ databases">
        <title>Pneumococcal beta glucoside metabolism investigated by whole genome comparison.</title>
        <authorList>
            <person name="Mulas L."/>
            <person name="Trappetti C."/>
            <person name="Hakenbeck R."/>
            <person name="Iannelli F."/>
            <person name="Pozzi G."/>
            <person name="Davidsen T.M."/>
            <person name="Tettelin H."/>
            <person name="Oggioni M."/>
        </authorList>
    </citation>
    <scope>NUCLEOTIDE SEQUENCE [LARGE SCALE GENOMIC DNA]</scope>
    <source>
        <strain>G54</strain>
    </source>
</reference>
<sequence length="380" mass="43121">MSDSPIKYRLIKKEKHTGARLGEIITPHGTFPTPMFMPVGTQATVKTQSPEELKEMGSGIILSNTYHLWLRPGDELIARAGGLHKFMNWDQPILTDSGGFQVYSLADSRNITEEGVTFKNHLNGSKMFLSPEKAISIQNNLGSDIMMSFDECPQFYQPYDYVKKSIERTSRWAERGLKAHRRPHDQGLFGIVQGAGFEDLRRQSAHDLVSMDFSGYSIGGLAVGETHEEMNAVLDFTTQLLPENKPRYLMGVGAPDSLIDGVIRGVDMFDCVLPTRIARNGTCMTSQGRLVVKNAQFAEDFTPLDPECDCYTCNNYTRAYLRHLLKADETFGIRLTSYHNLYFLLNLMKQVRQAIMDDNLLEFREYFVEKYGYNKSGRNF</sequence>
<name>TGT_STRP4</name>
<organism>
    <name type="scientific">Streptococcus pneumoniae serotype 19F (strain G54)</name>
    <dbReference type="NCBI Taxonomy" id="512566"/>
    <lineage>
        <taxon>Bacteria</taxon>
        <taxon>Bacillati</taxon>
        <taxon>Bacillota</taxon>
        <taxon>Bacilli</taxon>
        <taxon>Lactobacillales</taxon>
        <taxon>Streptococcaceae</taxon>
        <taxon>Streptococcus</taxon>
    </lineage>
</organism>
<comment type="function">
    <text evidence="1">Catalyzes the base-exchange of a guanine (G) residue with the queuine precursor 7-aminomethyl-7-deazaguanine (PreQ1) at position 34 (anticodon wobble position) in tRNAs with GU(N) anticodons (tRNA-Asp, -Asn, -His and -Tyr). Catalysis occurs through a double-displacement mechanism. The nucleophile active site attacks the C1' of nucleotide 34 to detach the guanine base from the RNA, forming a covalent enzyme-RNA intermediate. The proton acceptor active site deprotonates the incoming PreQ1, allowing a nucleophilic attack on the C1' of the ribose to form the product. After dissociation, two additional enzymatic reactions on the tRNA convert PreQ1 to queuine (Q), resulting in the hypermodified nucleoside queuosine (7-(((4,5-cis-dihydroxy-2-cyclopenten-1-yl)amino)methyl)-7-deazaguanosine).</text>
</comment>
<comment type="catalytic activity">
    <reaction evidence="1">
        <text>7-aminomethyl-7-carbaguanine + guanosine(34) in tRNA = 7-aminomethyl-7-carbaguanosine(34) in tRNA + guanine</text>
        <dbReference type="Rhea" id="RHEA:24104"/>
        <dbReference type="Rhea" id="RHEA-COMP:10341"/>
        <dbReference type="Rhea" id="RHEA-COMP:10342"/>
        <dbReference type="ChEBI" id="CHEBI:16235"/>
        <dbReference type="ChEBI" id="CHEBI:58703"/>
        <dbReference type="ChEBI" id="CHEBI:74269"/>
        <dbReference type="ChEBI" id="CHEBI:82833"/>
        <dbReference type="EC" id="2.4.2.29"/>
    </reaction>
</comment>
<comment type="cofactor">
    <cofactor evidence="1">
        <name>Zn(2+)</name>
        <dbReference type="ChEBI" id="CHEBI:29105"/>
    </cofactor>
    <text evidence="1">Binds 1 zinc ion per subunit.</text>
</comment>
<comment type="pathway">
    <text evidence="1">tRNA modification; tRNA-queuosine biosynthesis.</text>
</comment>
<comment type="subunit">
    <text evidence="1">Homodimer. Within each dimer, one monomer is responsible for RNA recognition and catalysis, while the other monomer binds to the replacement base PreQ1.</text>
</comment>
<comment type="similarity">
    <text evidence="1">Belongs to the queuine tRNA-ribosyltransferase family.</text>
</comment>
<accession>B5E2X9</accession>
<keyword id="KW-0328">Glycosyltransferase</keyword>
<keyword id="KW-0479">Metal-binding</keyword>
<keyword id="KW-0671">Queuosine biosynthesis</keyword>
<keyword id="KW-0808">Transferase</keyword>
<keyword id="KW-0819">tRNA processing</keyword>
<keyword id="KW-0862">Zinc</keyword>
<proteinExistence type="inferred from homology"/>
<gene>
    <name evidence="1" type="primary">tgt</name>
    <name type="ordered locus">SPG_1973</name>
</gene>
<protein>
    <recommendedName>
        <fullName evidence="1">Queuine tRNA-ribosyltransferase</fullName>
        <ecNumber evidence="1">2.4.2.29</ecNumber>
    </recommendedName>
    <alternativeName>
        <fullName evidence="1">Guanine insertion enzyme</fullName>
    </alternativeName>
    <alternativeName>
        <fullName evidence="1">tRNA-guanine transglycosylase</fullName>
    </alternativeName>
</protein>